<accession>Q68EI3</accession>
<gene>
    <name type="primary">agbl5</name>
    <name type="synonym">ccp5</name>
    <name type="ORF">zgc:91997</name>
</gene>
<sequence>MEIRVGSAVFSSRFDSGNLARVERVEASEAAGESSRSASVPQPDYEFNVWTRPDCASTEFENGNRSWFYFSVRGLLPGKLLKINMMNMNKQSKLYTQGMAPFVRTLPVKTRWERVRDRPTFEMSDSQFILSFVHRLLDVRGVTTYFSFCYPFSYAECQDMMLQLDHKFLSSTSTHTACSPPESIYYHRELLCHSLDGHRVDLITVSSCHGLLEEREPRLDKLFPDLSTARSHRFTGKRVFFVSSRVHPGETPSSFVFNGFLNFILSQEDPRAQTLRRMFVFKLIPMLNPDGVVRGHYRTDSRGVNLNRQYVNPSPDLHPSIYGAKSLLLYHHIHNRLGHASGSALKTSNQSNTSPPVATPTERERCMNLRNEAERGEGPTFDLSEIPMQLEESWEKSGVQREAEHSDENESAQSRGETNSAPSEQVPPQESGVAYYIDLHGHASKRGCFMYGNNLTEESQQVENMLYAKLISLNCAHFDFLGCNFSEKNMYARDKRDGQSKEGSGRVAIHKAIGLVHSYTLECNYNTGRSVNTIPPACHDNGRATPPPPPAFPPKYTPEVYEQVGRAVAVAALDMAECNPWPRLVLSEHSSLLNLRASILKHVRNSTGLTSNNRRNTHCKTSSSPPKPVSLSTSASENSLNRTRSTTNVQGSRQTPQLKSSPSFTFGTTAHRPSHRSLGPVRECKAQEKRRPPPPPLPHHHHQQHQRLSVRLSAPVRAPLSPSSSSSSSSSSPSSSSSAPGPGSISLAGNSCPEFRPANQIKELRGGRGKGGRSGPAYCHSSQQRTALTTKEPLQDSLDILTSIEYSRCELQPRPSRIPVRRELQSSVIPLSSTETPTMRVWKLIKPGLKKHLAGVSGKDRLSTKALLKNSSRQTDQHIHRSLPT</sequence>
<evidence type="ECO:0000250" key="1">
    <source>
        <dbReference type="UniProtKB" id="P00730"/>
    </source>
</evidence>
<evidence type="ECO:0000250" key="2">
    <source>
        <dbReference type="UniProtKB" id="Q09M02"/>
    </source>
</evidence>
<evidence type="ECO:0000250" key="3">
    <source>
        <dbReference type="UniProtKB" id="Q8NDL9"/>
    </source>
</evidence>
<evidence type="ECO:0000255" key="4">
    <source>
        <dbReference type="PROSITE-ProRule" id="PRU01379"/>
    </source>
</evidence>
<evidence type="ECO:0000256" key="5">
    <source>
        <dbReference type="SAM" id="MobiDB-lite"/>
    </source>
</evidence>
<evidence type="ECO:0000305" key="6"/>
<name>CBPC5_DANRE</name>
<reference key="1">
    <citation type="submission" date="2004-08" db="EMBL/GenBank/DDBJ databases">
        <authorList>
            <consortium name="NIH - Zebrafish Gene Collection (ZGC) project"/>
        </authorList>
    </citation>
    <scope>NUCLEOTIDE SEQUENCE [LARGE SCALE MRNA]</scope>
</reference>
<keyword id="KW-0121">Carboxypeptidase</keyword>
<keyword id="KW-0963">Cytoplasm</keyword>
<keyword id="KW-0206">Cytoskeleton</keyword>
<keyword id="KW-0378">Hydrolase</keyword>
<keyword id="KW-0479">Metal-binding</keyword>
<keyword id="KW-0482">Metalloprotease</keyword>
<keyword id="KW-0539">Nucleus</keyword>
<keyword id="KW-0645">Protease</keyword>
<keyword id="KW-1185">Reference proteome</keyword>
<keyword id="KW-0862">Zinc</keyword>
<feature type="chain" id="PRO_0000305923" description="Cytosolic carboxypeptidase-like protein 5">
    <location>
        <begin position="1"/>
        <end position="885"/>
    </location>
</feature>
<feature type="domain" description="Peptidase M14" evidence="4">
    <location>
        <begin position="150"/>
        <end position="576"/>
    </location>
</feature>
<feature type="region of interest" description="Disordered" evidence="5">
    <location>
        <begin position="341"/>
        <end position="364"/>
    </location>
</feature>
<feature type="region of interest" description="Disordered" evidence="5">
    <location>
        <begin position="392"/>
        <end position="428"/>
    </location>
</feature>
<feature type="region of interest" description="Disordered" evidence="5">
    <location>
        <begin position="606"/>
        <end position="788"/>
    </location>
</feature>
<feature type="region of interest" description="Disordered" evidence="5">
    <location>
        <begin position="866"/>
        <end position="885"/>
    </location>
</feature>
<feature type="compositionally biased region" description="Polar residues" evidence="5">
    <location>
        <begin position="344"/>
        <end position="356"/>
    </location>
</feature>
<feature type="compositionally biased region" description="Basic and acidic residues" evidence="5">
    <location>
        <begin position="393"/>
        <end position="408"/>
    </location>
</feature>
<feature type="compositionally biased region" description="Polar residues" evidence="5">
    <location>
        <begin position="411"/>
        <end position="428"/>
    </location>
</feature>
<feature type="compositionally biased region" description="Polar residues" evidence="5">
    <location>
        <begin position="606"/>
        <end position="668"/>
    </location>
</feature>
<feature type="compositionally biased region" description="Basic and acidic residues" evidence="5">
    <location>
        <begin position="682"/>
        <end position="691"/>
    </location>
</feature>
<feature type="compositionally biased region" description="Low complexity" evidence="5">
    <location>
        <begin position="712"/>
        <end position="749"/>
    </location>
</feature>
<feature type="active site" description="Proton donor/acceptor" evidence="4">
    <location>
        <position position="522"/>
    </location>
</feature>
<feature type="binding site" evidence="4">
    <location>
        <position position="247"/>
    </location>
    <ligand>
        <name>Zn(2+)</name>
        <dbReference type="ChEBI" id="CHEBI:29105"/>
        <note>catalytic</note>
    </ligand>
</feature>
<feature type="binding site" evidence="4">
    <location>
        <position position="250"/>
    </location>
    <ligand>
        <name>Zn(2+)</name>
        <dbReference type="ChEBI" id="CHEBI:29105"/>
        <note>catalytic</note>
    </ligand>
</feature>
<feature type="binding site" evidence="4">
    <location>
        <position position="440"/>
    </location>
    <ligand>
        <name>Zn(2+)</name>
        <dbReference type="ChEBI" id="CHEBI:29105"/>
        <note>catalytic</note>
    </ligand>
</feature>
<dbReference type="EC" id="3.4.17.-" evidence="2"/>
<dbReference type="EC" id="3.4.17.24" evidence="2"/>
<dbReference type="EMBL" id="BC080248">
    <property type="protein sequence ID" value="AAH80248.1"/>
    <property type="molecule type" value="mRNA"/>
</dbReference>
<dbReference type="RefSeq" id="NP_001004113.1">
    <property type="nucleotide sequence ID" value="NM_001004113.1"/>
</dbReference>
<dbReference type="SMR" id="Q68EI3"/>
<dbReference type="FunCoup" id="Q68EI3">
    <property type="interactions" value="1253"/>
</dbReference>
<dbReference type="STRING" id="7955.ENSDARP00000094377"/>
<dbReference type="MEROPS" id="M14.036"/>
<dbReference type="PaxDb" id="7955-ENSDARP00000094377"/>
<dbReference type="GeneID" id="445479"/>
<dbReference type="KEGG" id="dre:445479"/>
<dbReference type="AGR" id="ZFIN:ZDB-GENE-040822-29"/>
<dbReference type="CTD" id="60509"/>
<dbReference type="ZFIN" id="ZDB-GENE-040822-29">
    <property type="gene designation" value="agbl5"/>
</dbReference>
<dbReference type="eggNOG" id="KOG3641">
    <property type="taxonomic scope" value="Eukaryota"/>
</dbReference>
<dbReference type="InParanoid" id="Q68EI3"/>
<dbReference type="OrthoDB" id="10253041at2759"/>
<dbReference type="PhylomeDB" id="Q68EI3"/>
<dbReference type="BRENDA" id="3.4.17.24">
    <property type="organism ID" value="928"/>
</dbReference>
<dbReference type="PRO" id="PR:Q68EI3"/>
<dbReference type="Proteomes" id="UP000000437">
    <property type="component" value="Chromosome 4"/>
</dbReference>
<dbReference type="GO" id="GO:0005737">
    <property type="term" value="C:cytoplasm"/>
    <property type="evidence" value="ECO:0000318"/>
    <property type="project" value="GO_Central"/>
</dbReference>
<dbReference type="GO" id="GO:0005829">
    <property type="term" value="C:cytosol"/>
    <property type="evidence" value="ECO:0000250"/>
    <property type="project" value="UniProtKB"/>
</dbReference>
<dbReference type="GO" id="GO:0015630">
    <property type="term" value="C:microtubule cytoskeleton"/>
    <property type="evidence" value="ECO:0000318"/>
    <property type="project" value="GO_Central"/>
</dbReference>
<dbReference type="GO" id="GO:0030496">
    <property type="term" value="C:midbody"/>
    <property type="evidence" value="ECO:0000250"/>
    <property type="project" value="UniProtKB"/>
</dbReference>
<dbReference type="GO" id="GO:0072686">
    <property type="term" value="C:mitotic spindle"/>
    <property type="evidence" value="ECO:0000250"/>
    <property type="project" value="UniProtKB"/>
</dbReference>
<dbReference type="GO" id="GO:0005634">
    <property type="term" value="C:nucleus"/>
    <property type="evidence" value="ECO:0000250"/>
    <property type="project" value="UniProtKB"/>
</dbReference>
<dbReference type="GO" id="GO:0004181">
    <property type="term" value="F:metallocarboxypeptidase activity"/>
    <property type="evidence" value="ECO:0000250"/>
    <property type="project" value="UniProtKB"/>
</dbReference>
<dbReference type="GO" id="GO:0015631">
    <property type="term" value="F:tubulin binding"/>
    <property type="evidence" value="ECO:0000250"/>
    <property type="project" value="UniProtKB"/>
</dbReference>
<dbReference type="GO" id="GO:0008270">
    <property type="term" value="F:zinc ion binding"/>
    <property type="evidence" value="ECO:0007669"/>
    <property type="project" value="InterPro"/>
</dbReference>
<dbReference type="GO" id="GO:0035609">
    <property type="term" value="P:C-terminal protein deglutamylation"/>
    <property type="evidence" value="ECO:0000250"/>
    <property type="project" value="UniProtKB"/>
</dbReference>
<dbReference type="GO" id="GO:0043009">
    <property type="term" value="P:chordate embryonic development"/>
    <property type="evidence" value="ECO:0000315"/>
    <property type="project" value="ZFIN"/>
</dbReference>
<dbReference type="GO" id="GO:0060271">
    <property type="term" value="P:cilium assembly"/>
    <property type="evidence" value="ECO:0000315"/>
    <property type="project" value="ZFIN"/>
</dbReference>
<dbReference type="GO" id="GO:0051607">
    <property type="term" value="P:defense response to virus"/>
    <property type="evidence" value="ECO:0000250"/>
    <property type="project" value="UniProtKB"/>
</dbReference>
<dbReference type="GO" id="GO:0035611">
    <property type="term" value="P:protein branching point deglutamylation"/>
    <property type="evidence" value="ECO:0000250"/>
    <property type="project" value="UniProtKB"/>
</dbReference>
<dbReference type="GO" id="GO:0035608">
    <property type="term" value="P:protein deglutamylation"/>
    <property type="evidence" value="ECO:0000250"/>
    <property type="project" value="UniProtKB"/>
</dbReference>
<dbReference type="GO" id="GO:0035610">
    <property type="term" value="P:protein side chain deglutamylation"/>
    <property type="evidence" value="ECO:0000250"/>
    <property type="project" value="UniProtKB"/>
</dbReference>
<dbReference type="GO" id="GO:0006508">
    <property type="term" value="P:proteolysis"/>
    <property type="evidence" value="ECO:0007669"/>
    <property type="project" value="UniProtKB-KW"/>
</dbReference>
<dbReference type="CDD" id="cd06236">
    <property type="entry name" value="M14_AGBL5_like"/>
    <property type="match status" value="1"/>
</dbReference>
<dbReference type="Gene3D" id="2.60.40.3120">
    <property type="match status" value="1"/>
</dbReference>
<dbReference type="Gene3D" id="3.40.630.10">
    <property type="entry name" value="Zn peptidases"/>
    <property type="match status" value="2"/>
</dbReference>
<dbReference type="InterPro" id="IPR050821">
    <property type="entry name" value="Cytosolic_carboxypeptidase"/>
</dbReference>
<dbReference type="InterPro" id="IPR034286">
    <property type="entry name" value="M14_AGBL5-like"/>
</dbReference>
<dbReference type="InterPro" id="IPR040626">
    <property type="entry name" value="Pepdidase_M14_N"/>
</dbReference>
<dbReference type="InterPro" id="IPR000834">
    <property type="entry name" value="Peptidase_M14"/>
</dbReference>
<dbReference type="PANTHER" id="PTHR12756">
    <property type="entry name" value="CYTOSOLIC CARBOXYPEPTIDASE"/>
    <property type="match status" value="1"/>
</dbReference>
<dbReference type="PANTHER" id="PTHR12756:SF12">
    <property type="entry name" value="CYTOSOLIC CARBOXYPEPTIDASE-LIKE PROTEIN 5"/>
    <property type="match status" value="1"/>
</dbReference>
<dbReference type="Pfam" id="PF18027">
    <property type="entry name" value="Pepdidase_M14_N"/>
    <property type="match status" value="1"/>
</dbReference>
<dbReference type="Pfam" id="PF00246">
    <property type="entry name" value="Peptidase_M14"/>
    <property type="match status" value="1"/>
</dbReference>
<dbReference type="SUPFAM" id="SSF53187">
    <property type="entry name" value="Zn-dependent exopeptidases"/>
    <property type="match status" value="1"/>
</dbReference>
<dbReference type="PROSITE" id="PS52035">
    <property type="entry name" value="PEPTIDASE_M14"/>
    <property type="match status" value="1"/>
</dbReference>
<organism>
    <name type="scientific">Danio rerio</name>
    <name type="common">Zebrafish</name>
    <name type="synonym">Brachydanio rerio</name>
    <dbReference type="NCBI Taxonomy" id="7955"/>
    <lineage>
        <taxon>Eukaryota</taxon>
        <taxon>Metazoa</taxon>
        <taxon>Chordata</taxon>
        <taxon>Craniata</taxon>
        <taxon>Vertebrata</taxon>
        <taxon>Euteleostomi</taxon>
        <taxon>Actinopterygii</taxon>
        <taxon>Neopterygii</taxon>
        <taxon>Teleostei</taxon>
        <taxon>Ostariophysi</taxon>
        <taxon>Cypriniformes</taxon>
        <taxon>Danionidae</taxon>
        <taxon>Danioninae</taxon>
        <taxon>Danio</taxon>
    </lineage>
</organism>
<proteinExistence type="evidence at transcript level"/>
<comment type="function">
    <text evidence="2">Metallocarboxypeptidase that mediates deglutamylation of tubulin and non-tubulin target proteins. Catalyzes the removal of polyglutamate side chains present on the gamma-carboxyl group of glutamate residues within the C-terminal tail of alpha- and beta-tubulin. Cleaves alpha- and gamma-linked polyglutamate tubulin side-chain, as well as the branching point glutamate. Also catalyzes the removal of alpha-linked glutamate residues from the carboxy-terminus of alpha-tubulin.</text>
</comment>
<comment type="catalytic activity">
    <reaction evidence="2">
        <text>gamma-L-glutamyl-L-glutamyl-[protein] + H2O = L-glutamyl-[protein] + L-glutamate</text>
        <dbReference type="Rhea" id="RHEA:60152"/>
        <dbReference type="Rhea" id="RHEA-COMP:10208"/>
        <dbReference type="Rhea" id="RHEA-COMP:15517"/>
        <dbReference type="ChEBI" id="CHEBI:15377"/>
        <dbReference type="ChEBI" id="CHEBI:29973"/>
        <dbReference type="ChEBI" id="CHEBI:29985"/>
        <dbReference type="ChEBI" id="CHEBI:143622"/>
    </reaction>
    <physiologicalReaction direction="left-to-right" evidence="2">
        <dbReference type="Rhea" id="RHEA:60153"/>
    </physiologicalReaction>
</comment>
<comment type="catalytic activity">
    <reaction evidence="2">
        <text>(L-glutamyl)(n+1)-gamma-L-glutamyl-L-glutamyl-[protein] + H2O = (L-glutamyl)(n)-gamma-L-glutamyl-L-glutamyl-[protein] + L-glutamate</text>
        <dbReference type="Rhea" id="RHEA:60004"/>
        <dbReference type="Rhea" id="RHEA-COMP:15519"/>
        <dbReference type="Rhea" id="RHEA-COMP:15675"/>
        <dbReference type="ChEBI" id="CHEBI:15377"/>
        <dbReference type="ChEBI" id="CHEBI:29985"/>
        <dbReference type="ChEBI" id="CHEBI:143623"/>
    </reaction>
    <physiologicalReaction direction="left-to-right" evidence="2">
        <dbReference type="Rhea" id="RHEA:60005"/>
    </physiologicalReaction>
</comment>
<comment type="catalytic activity">
    <reaction evidence="2">
        <text>C-terminal L-alpha-aminoacyl-L-glutamyl-[tubulin] + H2O = C-terminal L-alpha-aminoacyl-[tubulin] + L-glutamate</text>
        <dbReference type="Rhea" id="RHEA:63796"/>
        <dbReference type="Rhea" id="RHEA-COMP:16436"/>
        <dbReference type="Rhea" id="RHEA-COMP:16437"/>
        <dbReference type="ChEBI" id="CHEBI:15377"/>
        <dbReference type="ChEBI" id="CHEBI:29985"/>
        <dbReference type="ChEBI" id="CHEBI:90782"/>
        <dbReference type="ChEBI" id="CHEBI:149556"/>
        <dbReference type="EC" id="3.4.17.24"/>
    </reaction>
    <physiologicalReaction direction="left-to-right" evidence="2">
        <dbReference type="Rhea" id="RHEA:63797"/>
    </physiologicalReaction>
</comment>
<comment type="catalytic activity">
    <reaction evidence="2">
        <text>C-terminal L-alpha-aminoacyl-L-glutamyl-L-glutamyl-[tubulin] + H2O = C-terminal L-alpha-aminoacyl-L-glutamyl-[tubulin] + L-glutamate</text>
        <dbReference type="Rhea" id="RHEA:63792"/>
        <dbReference type="Rhea" id="RHEA-COMP:16435"/>
        <dbReference type="Rhea" id="RHEA-COMP:16436"/>
        <dbReference type="ChEBI" id="CHEBI:15377"/>
        <dbReference type="ChEBI" id="CHEBI:29985"/>
        <dbReference type="ChEBI" id="CHEBI:149555"/>
        <dbReference type="ChEBI" id="CHEBI:149556"/>
        <dbReference type="EC" id="3.4.17.24"/>
    </reaction>
    <physiologicalReaction direction="left-to-right" evidence="2">
        <dbReference type="Rhea" id="RHEA:63793"/>
    </physiologicalReaction>
</comment>
<comment type="cofactor">
    <cofactor evidence="1">
        <name>Zn(2+)</name>
        <dbReference type="ChEBI" id="CHEBI:29105"/>
    </cofactor>
    <text evidence="1">Binds 1 zinc ion per subunit.</text>
</comment>
<comment type="subcellular location">
    <subcellularLocation>
        <location evidence="2">Cytoplasm</location>
        <location evidence="2">Cytosol</location>
    </subcellularLocation>
    <subcellularLocation>
        <location evidence="2">Nucleus</location>
    </subcellularLocation>
    <subcellularLocation>
        <location evidence="3">Cytoplasm</location>
        <location evidence="3">Cytoskeleton</location>
        <location evidence="3">Spindle</location>
    </subcellularLocation>
    <subcellularLocation>
        <location evidence="3">Midbody</location>
    </subcellularLocation>
</comment>
<comment type="similarity">
    <text evidence="6">Belongs to the peptidase M14 family.</text>
</comment>
<protein>
    <recommendedName>
        <fullName evidence="2">Cytosolic carboxypeptidase-like protein 5</fullName>
        <ecNumber evidence="2">3.4.17.-</ecNumber>
        <ecNumber evidence="2">3.4.17.24</ecNumber>
    </recommendedName>
    <alternativeName>
        <fullName>ATP/GTP-binding protein-like 5</fullName>
    </alternativeName>
    <alternativeName>
        <fullName evidence="6">Protein deglutamylase CCP5</fullName>
    </alternativeName>
</protein>